<dbReference type="EC" id="7.1.1.2" evidence="1"/>
<dbReference type="EMBL" id="M10217">
    <property type="protein sequence ID" value="AAA66458.1"/>
    <property type="molecule type" value="Genomic_DNA"/>
</dbReference>
<dbReference type="PIR" id="A00411">
    <property type="entry name" value="QXXL1M"/>
</dbReference>
<dbReference type="RefSeq" id="NP_008134.1">
    <property type="nucleotide sequence ID" value="NC_001573.1"/>
</dbReference>
<dbReference type="SMR" id="P03890"/>
<dbReference type="GeneID" id="2642086"/>
<dbReference type="KEGG" id="xla:2642086"/>
<dbReference type="CTD" id="4535"/>
<dbReference type="OrthoDB" id="531329at2759"/>
<dbReference type="Proteomes" id="UP000186698">
    <property type="component" value="Mitochondrion MT"/>
</dbReference>
<dbReference type="Bgee" id="2642086">
    <property type="expression patterns" value="Expressed in blastula and 19 other cell types or tissues"/>
</dbReference>
<dbReference type="GO" id="GO:0005743">
    <property type="term" value="C:mitochondrial inner membrane"/>
    <property type="evidence" value="ECO:0000250"/>
    <property type="project" value="UniProtKB"/>
</dbReference>
<dbReference type="GO" id="GO:0045271">
    <property type="term" value="C:respiratory chain complex I"/>
    <property type="evidence" value="ECO:0000318"/>
    <property type="project" value="GO_Central"/>
</dbReference>
<dbReference type="GO" id="GO:0008137">
    <property type="term" value="F:NADH dehydrogenase (ubiquinone) activity"/>
    <property type="evidence" value="ECO:0000250"/>
    <property type="project" value="UniProtKB"/>
</dbReference>
<dbReference type="GO" id="GO:0009060">
    <property type="term" value="P:aerobic respiration"/>
    <property type="evidence" value="ECO:0000318"/>
    <property type="project" value="GO_Central"/>
</dbReference>
<dbReference type="GO" id="GO:0006120">
    <property type="term" value="P:mitochondrial electron transport, NADH to ubiquinone"/>
    <property type="evidence" value="ECO:0000250"/>
    <property type="project" value="UniProtKB"/>
</dbReference>
<dbReference type="GO" id="GO:0032981">
    <property type="term" value="P:mitochondrial respiratory chain complex I assembly"/>
    <property type="evidence" value="ECO:0000250"/>
    <property type="project" value="UniProtKB"/>
</dbReference>
<dbReference type="HAMAP" id="MF_01350">
    <property type="entry name" value="NDH1_NuoH"/>
    <property type="match status" value="1"/>
</dbReference>
<dbReference type="InterPro" id="IPR001694">
    <property type="entry name" value="NADH_UbQ_OxRdtase_su1/FPO"/>
</dbReference>
<dbReference type="InterPro" id="IPR018086">
    <property type="entry name" value="NADH_UbQ_OxRdtase_su1_CS"/>
</dbReference>
<dbReference type="PANTHER" id="PTHR11432">
    <property type="entry name" value="NADH DEHYDROGENASE SUBUNIT 1"/>
    <property type="match status" value="1"/>
</dbReference>
<dbReference type="PANTHER" id="PTHR11432:SF3">
    <property type="entry name" value="NADH-UBIQUINONE OXIDOREDUCTASE CHAIN 1"/>
    <property type="match status" value="1"/>
</dbReference>
<dbReference type="Pfam" id="PF00146">
    <property type="entry name" value="NADHdh"/>
    <property type="match status" value="1"/>
</dbReference>
<dbReference type="PROSITE" id="PS00667">
    <property type="entry name" value="COMPLEX1_ND1_1"/>
    <property type="match status" value="1"/>
</dbReference>
<dbReference type="PROSITE" id="PS00668">
    <property type="entry name" value="COMPLEX1_ND1_2"/>
    <property type="match status" value="1"/>
</dbReference>
<keyword id="KW-0249">Electron transport</keyword>
<keyword id="KW-0472">Membrane</keyword>
<keyword id="KW-0496">Mitochondrion</keyword>
<keyword id="KW-0999">Mitochondrion inner membrane</keyword>
<keyword id="KW-0520">NAD</keyword>
<keyword id="KW-1185">Reference proteome</keyword>
<keyword id="KW-0679">Respiratory chain</keyword>
<keyword id="KW-1278">Translocase</keyword>
<keyword id="KW-0812">Transmembrane</keyword>
<keyword id="KW-1133">Transmembrane helix</keyword>
<keyword id="KW-0813">Transport</keyword>
<keyword id="KW-0830">Ubiquinone</keyword>
<gene>
    <name type="primary">mt-nd1</name>
    <name type="synonym">mtnd1</name>
    <name type="synonym">nadh1</name>
    <name type="synonym">nd1</name>
</gene>
<protein>
    <recommendedName>
        <fullName>NADH-ubiquinone oxidoreductase chain 1</fullName>
        <ecNumber evidence="1">7.1.1.2</ecNumber>
    </recommendedName>
    <alternativeName>
        <fullName>NADH dehydrogenase subunit 1</fullName>
    </alternativeName>
</protein>
<name>NU1M_XENLA</name>
<proteinExistence type="inferred from homology"/>
<organism>
    <name type="scientific">Xenopus laevis</name>
    <name type="common">African clawed frog</name>
    <dbReference type="NCBI Taxonomy" id="8355"/>
    <lineage>
        <taxon>Eukaryota</taxon>
        <taxon>Metazoa</taxon>
        <taxon>Chordata</taxon>
        <taxon>Craniata</taxon>
        <taxon>Vertebrata</taxon>
        <taxon>Euteleostomi</taxon>
        <taxon>Amphibia</taxon>
        <taxon>Batrachia</taxon>
        <taxon>Anura</taxon>
        <taxon>Pipoidea</taxon>
        <taxon>Pipidae</taxon>
        <taxon>Xenopodinae</taxon>
        <taxon>Xenopus</taxon>
        <taxon>Xenopus</taxon>
    </lineage>
</organism>
<evidence type="ECO:0000250" key="1">
    <source>
        <dbReference type="UniProtKB" id="P03886"/>
    </source>
</evidence>
<evidence type="ECO:0000250" key="2">
    <source>
        <dbReference type="UniProtKB" id="P03887"/>
    </source>
</evidence>
<evidence type="ECO:0000255" key="3"/>
<evidence type="ECO:0000305" key="4"/>
<feature type="chain" id="PRO_0000117500" description="NADH-ubiquinone oxidoreductase chain 1">
    <location>
        <begin position="1"/>
        <end position="323"/>
    </location>
</feature>
<feature type="transmembrane region" description="Helical" evidence="3">
    <location>
        <begin position="8"/>
        <end position="28"/>
    </location>
</feature>
<feature type="transmembrane region" description="Helical" evidence="3">
    <location>
        <begin position="75"/>
        <end position="95"/>
    </location>
</feature>
<feature type="transmembrane region" description="Helical" evidence="3">
    <location>
        <begin position="105"/>
        <end position="125"/>
    </location>
</feature>
<feature type="transmembrane region" description="Helical" evidence="3">
    <location>
        <begin position="151"/>
        <end position="171"/>
    </location>
</feature>
<feature type="transmembrane region" description="Helical" evidence="3">
    <location>
        <begin position="177"/>
        <end position="197"/>
    </location>
</feature>
<feature type="transmembrane region" description="Helical" evidence="3">
    <location>
        <begin position="234"/>
        <end position="254"/>
    </location>
</feature>
<feature type="transmembrane region" description="Helical" evidence="3">
    <location>
        <begin position="258"/>
        <end position="278"/>
    </location>
</feature>
<feature type="transmembrane region" description="Helical" evidence="3">
    <location>
        <begin position="298"/>
        <end position="318"/>
    </location>
</feature>
<accession>P03890</accession>
<reference key="1">
    <citation type="journal article" date="1985" name="J. Biol. Chem.">
        <title>The complete nucleotide sequence of the Xenopus laevis mitochondrial genome.</title>
        <authorList>
            <person name="Roe B.A."/>
            <person name="Ma D.-P."/>
            <person name="Wilson R.K."/>
            <person name="Wong J.F.-H."/>
        </authorList>
    </citation>
    <scope>NUCLEOTIDE SEQUENCE [GENOMIC DNA]</scope>
</reference>
<geneLocation type="mitochondrion"/>
<comment type="function">
    <text evidence="1">Core subunit of the mitochondrial membrane respiratory chain NADH dehydrogenase (Complex I) which catalyzes electron transfer from NADH through the respiratory chain, using ubiquinone as an electron acceptor. Essential for the catalytic activity and assembly of complex I.</text>
</comment>
<comment type="catalytic activity">
    <reaction evidence="1">
        <text>a ubiquinone + NADH + 5 H(+)(in) = a ubiquinol + NAD(+) + 4 H(+)(out)</text>
        <dbReference type="Rhea" id="RHEA:29091"/>
        <dbReference type="Rhea" id="RHEA-COMP:9565"/>
        <dbReference type="Rhea" id="RHEA-COMP:9566"/>
        <dbReference type="ChEBI" id="CHEBI:15378"/>
        <dbReference type="ChEBI" id="CHEBI:16389"/>
        <dbReference type="ChEBI" id="CHEBI:17976"/>
        <dbReference type="ChEBI" id="CHEBI:57540"/>
        <dbReference type="ChEBI" id="CHEBI:57945"/>
        <dbReference type="EC" id="7.1.1.2"/>
    </reaction>
</comment>
<comment type="subunit">
    <text evidence="2">Core subunit of respiratory chain NADH dehydrogenase (Complex I) which is composed of 45 different subunits.</text>
</comment>
<comment type="subcellular location">
    <subcellularLocation>
        <location evidence="2">Mitochondrion inner membrane</location>
        <topology evidence="3">Multi-pass membrane protein</topology>
    </subcellularLocation>
</comment>
<comment type="similarity">
    <text evidence="4">Belongs to the complex I subunit 1 family.</text>
</comment>
<sequence length="323" mass="35862">MLTIITHLINPLLYMIPILLAVAFLTLIERKVLGYMQHRKGPNIVGPTGLIQPIADGVKLFIKEPVRPSTSSQTMFLIAPTMALALAMSIWAPLPMPFSLADLNLGILFILALSSLAVYTILGSGWSSNSKYALIGALRAVAQTISYEVTLGLILLCMIMLAGGFTYTTLMTTQEQMWLIIPGWPMAAMWYISTLAETNRAPFDLTEGESELVSGFNVEYAGGPFALFSLAEYANILMMNTLSYLILFLGSSFMNQPELTTISLMIKSSILSMIFLWVRASYPRFRYDQLMHLVWKNFLPITLAMTLWHISLPISMLGLPSQT</sequence>